<evidence type="ECO:0000255" key="1">
    <source>
        <dbReference type="HAMAP-Rule" id="MF_01200"/>
    </source>
</evidence>
<accession>B7I534</accession>
<comment type="function">
    <text evidence="1">Catalyzes the decarboxylation of orotidine 5'-monophosphate (OMP) to uridine 5'-monophosphate (UMP).</text>
</comment>
<comment type="catalytic activity">
    <reaction evidence="1">
        <text>orotidine 5'-phosphate + H(+) = UMP + CO2</text>
        <dbReference type="Rhea" id="RHEA:11596"/>
        <dbReference type="ChEBI" id="CHEBI:15378"/>
        <dbReference type="ChEBI" id="CHEBI:16526"/>
        <dbReference type="ChEBI" id="CHEBI:57538"/>
        <dbReference type="ChEBI" id="CHEBI:57865"/>
        <dbReference type="EC" id="4.1.1.23"/>
    </reaction>
</comment>
<comment type="pathway">
    <text evidence="1">Pyrimidine metabolism; UMP biosynthesis via de novo pathway; UMP from orotate: step 2/2.</text>
</comment>
<comment type="subunit">
    <text evidence="1">Homodimer.</text>
</comment>
<comment type="similarity">
    <text evidence="1">Belongs to the OMP decarboxylase family. Type 1 subfamily.</text>
</comment>
<proteinExistence type="inferred from homology"/>
<dbReference type="EC" id="4.1.1.23" evidence="1"/>
<dbReference type="EMBL" id="CP001182">
    <property type="protein sequence ID" value="ACJ41200.1"/>
    <property type="molecule type" value="Genomic_DNA"/>
</dbReference>
<dbReference type="RefSeq" id="WP_000392931.1">
    <property type="nucleotide sequence ID" value="NC_011586.2"/>
</dbReference>
<dbReference type="SMR" id="B7I534"/>
<dbReference type="KEGG" id="abn:AB57_1821"/>
<dbReference type="HOGENOM" id="CLU_067069_0_0_6"/>
<dbReference type="UniPathway" id="UPA00070">
    <property type="reaction ID" value="UER00120"/>
</dbReference>
<dbReference type="Proteomes" id="UP000007094">
    <property type="component" value="Chromosome"/>
</dbReference>
<dbReference type="GO" id="GO:0005829">
    <property type="term" value="C:cytosol"/>
    <property type="evidence" value="ECO:0007669"/>
    <property type="project" value="TreeGrafter"/>
</dbReference>
<dbReference type="GO" id="GO:0004590">
    <property type="term" value="F:orotidine-5'-phosphate decarboxylase activity"/>
    <property type="evidence" value="ECO:0007669"/>
    <property type="project" value="UniProtKB-UniRule"/>
</dbReference>
<dbReference type="GO" id="GO:0006207">
    <property type="term" value="P:'de novo' pyrimidine nucleobase biosynthetic process"/>
    <property type="evidence" value="ECO:0007669"/>
    <property type="project" value="InterPro"/>
</dbReference>
<dbReference type="GO" id="GO:0044205">
    <property type="term" value="P:'de novo' UMP biosynthetic process"/>
    <property type="evidence" value="ECO:0007669"/>
    <property type="project" value="UniProtKB-UniRule"/>
</dbReference>
<dbReference type="CDD" id="cd04725">
    <property type="entry name" value="OMP_decarboxylase_like"/>
    <property type="match status" value="1"/>
</dbReference>
<dbReference type="FunFam" id="3.20.20.70:FF:000015">
    <property type="entry name" value="Orotidine 5'-phosphate decarboxylase"/>
    <property type="match status" value="1"/>
</dbReference>
<dbReference type="Gene3D" id="3.20.20.70">
    <property type="entry name" value="Aldolase class I"/>
    <property type="match status" value="1"/>
</dbReference>
<dbReference type="HAMAP" id="MF_01200_B">
    <property type="entry name" value="OMPdecase_type1_B"/>
    <property type="match status" value="1"/>
</dbReference>
<dbReference type="InterPro" id="IPR013785">
    <property type="entry name" value="Aldolase_TIM"/>
</dbReference>
<dbReference type="InterPro" id="IPR014732">
    <property type="entry name" value="OMPdecase"/>
</dbReference>
<dbReference type="InterPro" id="IPR018089">
    <property type="entry name" value="OMPdecase_AS"/>
</dbReference>
<dbReference type="InterPro" id="IPR047596">
    <property type="entry name" value="OMPdecase_bac"/>
</dbReference>
<dbReference type="InterPro" id="IPR001754">
    <property type="entry name" value="OMPdeCOase_dom"/>
</dbReference>
<dbReference type="InterPro" id="IPR011060">
    <property type="entry name" value="RibuloseP-bd_barrel"/>
</dbReference>
<dbReference type="NCBIfam" id="NF001273">
    <property type="entry name" value="PRK00230.1"/>
    <property type="match status" value="1"/>
</dbReference>
<dbReference type="NCBIfam" id="TIGR01740">
    <property type="entry name" value="pyrF"/>
    <property type="match status" value="1"/>
</dbReference>
<dbReference type="PANTHER" id="PTHR32119">
    <property type="entry name" value="OROTIDINE 5'-PHOSPHATE DECARBOXYLASE"/>
    <property type="match status" value="1"/>
</dbReference>
<dbReference type="PANTHER" id="PTHR32119:SF2">
    <property type="entry name" value="OROTIDINE 5'-PHOSPHATE DECARBOXYLASE"/>
    <property type="match status" value="1"/>
</dbReference>
<dbReference type="Pfam" id="PF00215">
    <property type="entry name" value="OMPdecase"/>
    <property type="match status" value="1"/>
</dbReference>
<dbReference type="SMART" id="SM00934">
    <property type="entry name" value="OMPdecase"/>
    <property type="match status" value="1"/>
</dbReference>
<dbReference type="SUPFAM" id="SSF51366">
    <property type="entry name" value="Ribulose-phoshate binding barrel"/>
    <property type="match status" value="1"/>
</dbReference>
<dbReference type="PROSITE" id="PS00156">
    <property type="entry name" value="OMPDECASE"/>
    <property type="match status" value="1"/>
</dbReference>
<gene>
    <name evidence="1" type="primary">pyrF</name>
    <name type="ordered locus">AB57_1821</name>
</gene>
<feature type="chain" id="PRO_1000138502" description="Orotidine 5'-phosphate decarboxylase">
    <location>
        <begin position="1"/>
        <end position="232"/>
    </location>
</feature>
<feature type="active site" description="Proton donor" evidence="1">
    <location>
        <position position="64"/>
    </location>
</feature>
<feature type="binding site" evidence="1">
    <location>
        <position position="13"/>
    </location>
    <ligand>
        <name>substrate</name>
    </ligand>
</feature>
<feature type="binding site" evidence="1">
    <location>
        <position position="35"/>
    </location>
    <ligand>
        <name>substrate</name>
    </ligand>
</feature>
<feature type="binding site" evidence="1">
    <location>
        <begin position="62"/>
        <end position="71"/>
    </location>
    <ligand>
        <name>substrate</name>
    </ligand>
</feature>
<feature type="binding site" evidence="1">
    <location>
        <position position="121"/>
    </location>
    <ligand>
        <name>substrate</name>
    </ligand>
</feature>
<feature type="binding site" evidence="1">
    <location>
        <position position="182"/>
    </location>
    <ligand>
        <name>substrate</name>
    </ligand>
</feature>
<feature type="binding site" evidence="1">
    <location>
        <position position="191"/>
    </location>
    <ligand>
        <name>substrate</name>
    </ligand>
</feature>
<feature type="binding site" evidence="1">
    <location>
        <position position="211"/>
    </location>
    <ligand>
        <name>substrate</name>
    </ligand>
</feature>
<feature type="binding site" evidence="1">
    <location>
        <position position="212"/>
    </location>
    <ligand>
        <name>substrate</name>
    </ligand>
</feature>
<sequence>MEESLLSIIVALDAKSQYDALKIVEQLDPTLCRVKVGKELFTHEGPSVVKKLQEENFEVFLDLKFHDIPNTTAQAVCAAADLGVWMVNVHASGGRKMMETCVERLKAGNYQTQLIAVTVLTSMGREDLKDIGLDIEPVEQVKRLAKLTKESGLDGVVCSAQEAKILRELIGQDFSLVTPGIRPEGSNADDQKRIVTPKQAMLDGSTHLVIGRPITNAENPTEMLKSILASIA</sequence>
<protein>
    <recommendedName>
        <fullName evidence="1">Orotidine 5'-phosphate decarboxylase</fullName>
        <ecNumber evidence="1">4.1.1.23</ecNumber>
    </recommendedName>
    <alternativeName>
        <fullName evidence="1">OMP decarboxylase</fullName>
        <shortName evidence="1">OMPDCase</shortName>
        <shortName evidence="1">OMPdecase</shortName>
    </alternativeName>
</protein>
<name>PYRF_ACIB5</name>
<keyword id="KW-0210">Decarboxylase</keyword>
<keyword id="KW-0456">Lyase</keyword>
<keyword id="KW-0665">Pyrimidine biosynthesis</keyword>
<organism>
    <name type="scientific">Acinetobacter baumannii (strain AB0057)</name>
    <dbReference type="NCBI Taxonomy" id="480119"/>
    <lineage>
        <taxon>Bacteria</taxon>
        <taxon>Pseudomonadati</taxon>
        <taxon>Pseudomonadota</taxon>
        <taxon>Gammaproteobacteria</taxon>
        <taxon>Moraxellales</taxon>
        <taxon>Moraxellaceae</taxon>
        <taxon>Acinetobacter</taxon>
        <taxon>Acinetobacter calcoaceticus/baumannii complex</taxon>
    </lineage>
</organism>
<reference key="1">
    <citation type="journal article" date="2008" name="J. Bacteriol.">
        <title>Comparative genome sequence analysis of multidrug-resistant Acinetobacter baumannii.</title>
        <authorList>
            <person name="Adams M.D."/>
            <person name="Goglin K."/>
            <person name="Molyneaux N."/>
            <person name="Hujer K.M."/>
            <person name="Lavender H."/>
            <person name="Jamison J.J."/>
            <person name="MacDonald I.J."/>
            <person name="Martin K.M."/>
            <person name="Russo T."/>
            <person name="Campagnari A.A."/>
            <person name="Hujer A.M."/>
            <person name="Bonomo R.A."/>
            <person name="Gill S.R."/>
        </authorList>
    </citation>
    <scope>NUCLEOTIDE SEQUENCE [LARGE SCALE GENOMIC DNA]</scope>
    <source>
        <strain>AB0057</strain>
    </source>
</reference>